<proteinExistence type="inferred from homology"/>
<reference key="1">
    <citation type="submission" date="2006-01" db="EMBL/GenBank/DDBJ databases">
        <title>Complete sequence of Novosphingobium aromaticivorans DSM 12444.</title>
        <authorList>
            <consortium name="US DOE Joint Genome Institute"/>
            <person name="Copeland A."/>
            <person name="Lucas S."/>
            <person name="Lapidus A."/>
            <person name="Barry K."/>
            <person name="Detter J.C."/>
            <person name="Glavina T."/>
            <person name="Hammon N."/>
            <person name="Israni S."/>
            <person name="Pitluck S."/>
            <person name="Chain P."/>
            <person name="Malfatti S."/>
            <person name="Shin M."/>
            <person name="Vergez L."/>
            <person name="Schmutz J."/>
            <person name="Larimer F."/>
            <person name="Land M."/>
            <person name="Kyrpides N."/>
            <person name="Ivanova N."/>
            <person name="Fredrickson J."/>
            <person name="Balkwill D."/>
            <person name="Romine M.F."/>
            <person name="Richardson P."/>
        </authorList>
    </citation>
    <scope>NUCLEOTIDE SEQUENCE [LARGE SCALE GENOMIC DNA]</scope>
    <source>
        <strain>ATCC 700278 / DSM 12444 / CCUG 56034 / CIP 105152 / NBRC 16084 / F199</strain>
    </source>
</reference>
<feature type="chain" id="PRO_0000255874" description="Pyridoxine/pyridoxamine 5'-phosphate oxidase">
    <location>
        <begin position="1"/>
        <end position="203"/>
    </location>
</feature>
<feature type="binding site" evidence="1">
    <location>
        <begin position="51"/>
        <end position="56"/>
    </location>
    <ligand>
        <name>FMN</name>
        <dbReference type="ChEBI" id="CHEBI:58210"/>
    </ligand>
</feature>
<feature type="binding site" evidence="1">
    <location>
        <position position="56"/>
    </location>
    <ligand>
        <name>substrate</name>
    </ligand>
</feature>
<feature type="binding site" evidence="1">
    <location>
        <begin position="66"/>
        <end position="67"/>
    </location>
    <ligand>
        <name>FMN</name>
        <dbReference type="ChEBI" id="CHEBI:58210"/>
    </ligand>
</feature>
<feature type="binding site" evidence="1">
    <location>
        <position position="72"/>
    </location>
    <ligand>
        <name>FMN</name>
        <dbReference type="ChEBI" id="CHEBI:58210"/>
    </ligand>
</feature>
<feature type="binding site" evidence="1">
    <location>
        <position position="73"/>
    </location>
    <ligand>
        <name>FMN</name>
        <dbReference type="ChEBI" id="CHEBI:58210"/>
    </ligand>
</feature>
<feature type="binding site" evidence="1">
    <location>
        <position position="95"/>
    </location>
    <ligand>
        <name>FMN</name>
        <dbReference type="ChEBI" id="CHEBI:58210"/>
    </ligand>
</feature>
<feature type="binding site" evidence="1">
    <location>
        <position position="113"/>
    </location>
    <ligand>
        <name>substrate</name>
    </ligand>
</feature>
<feature type="binding site" evidence="1">
    <location>
        <position position="117"/>
    </location>
    <ligand>
        <name>substrate</name>
    </ligand>
</feature>
<feature type="binding site" evidence="1">
    <location>
        <position position="121"/>
    </location>
    <ligand>
        <name>substrate</name>
    </ligand>
</feature>
<feature type="binding site" evidence="1">
    <location>
        <begin position="130"/>
        <end position="131"/>
    </location>
    <ligand>
        <name>FMN</name>
        <dbReference type="ChEBI" id="CHEBI:58210"/>
    </ligand>
</feature>
<feature type="binding site" evidence="1">
    <location>
        <position position="175"/>
    </location>
    <ligand>
        <name>FMN</name>
        <dbReference type="ChEBI" id="CHEBI:58210"/>
    </ligand>
</feature>
<feature type="binding site" evidence="1">
    <location>
        <begin position="181"/>
        <end position="183"/>
    </location>
    <ligand>
        <name>substrate</name>
    </ligand>
</feature>
<feature type="binding site" evidence="1">
    <location>
        <position position="185"/>
    </location>
    <ligand>
        <name>FMN</name>
        <dbReference type="ChEBI" id="CHEBI:58210"/>
    </ligand>
</feature>
<evidence type="ECO:0000255" key="1">
    <source>
        <dbReference type="HAMAP-Rule" id="MF_01629"/>
    </source>
</evidence>
<dbReference type="EC" id="1.4.3.5" evidence="1"/>
<dbReference type="EMBL" id="CP000248">
    <property type="protein sequence ID" value="ABD24497.1"/>
    <property type="molecule type" value="Genomic_DNA"/>
</dbReference>
<dbReference type="RefSeq" id="WP_011443711.1">
    <property type="nucleotide sequence ID" value="NC_007794.1"/>
</dbReference>
<dbReference type="SMR" id="Q2GCC6"/>
<dbReference type="STRING" id="279238.Saro_0048"/>
<dbReference type="KEGG" id="nar:Saro_0048"/>
<dbReference type="eggNOG" id="COG0259">
    <property type="taxonomic scope" value="Bacteria"/>
</dbReference>
<dbReference type="HOGENOM" id="CLU_032263_2_3_5"/>
<dbReference type="UniPathway" id="UPA01068">
    <property type="reaction ID" value="UER00304"/>
</dbReference>
<dbReference type="UniPathway" id="UPA01068">
    <property type="reaction ID" value="UER00305"/>
</dbReference>
<dbReference type="Proteomes" id="UP000009134">
    <property type="component" value="Chromosome"/>
</dbReference>
<dbReference type="GO" id="GO:0010181">
    <property type="term" value="F:FMN binding"/>
    <property type="evidence" value="ECO:0007669"/>
    <property type="project" value="UniProtKB-UniRule"/>
</dbReference>
<dbReference type="GO" id="GO:0004733">
    <property type="term" value="F:pyridoxamine phosphate oxidase activity"/>
    <property type="evidence" value="ECO:0007669"/>
    <property type="project" value="UniProtKB-UniRule"/>
</dbReference>
<dbReference type="GO" id="GO:0008615">
    <property type="term" value="P:pyridoxine biosynthetic process"/>
    <property type="evidence" value="ECO:0007669"/>
    <property type="project" value="UniProtKB-KW"/>
</dbReference>
<dbReference type="Gene3D" id="2.30.110.10">
    <property type="entry name" value="Electron Transport, Fmn-binding Protein, Chain A"/>
    <property type="match status" value="1"/>
</dbReference>
<dbReference type="HAMAP" id="MF_01629">
    <property type="entry name" value="PdxH"/>
    <property type="match status" value="1"/>
</dbReference>
<dbReference type="InterPro" id="IPR000659">
    <property type="entry name" value="Pyridox_Oxase"/>
</dbReference>
<dbReference type="InterPro" id="IPR019740">
    <property type="entry name" value="Pyridox_Oxase_CS"/>
</dbReference>
<dbReference type="InterPro" id="IPR011576">
    <property type="entry name" value="Pyridox_Oxase_N"/>
</dbReference>
<dbReference type="InterPro" id="IPR019576">
    <property type="entry name" value="Pyridoxamine_oxidase_dimer_C"/>
</dbReference>
<dbReference type="InterPro" id="IPR012349">
    <property type="entry name" value="Split_barrel_FMN-bd"/>
</dbReference>
<dbReference type="NCBIfam" id="TIGR00558">
    <property type="entry name" value="pdxH"/>
    <property type="match status" value="1"/>
</dbReference>
<dbReference type="NCBIfam" id="NF004231">
    <property type="entry name" value="PRK05679.1"/>
    <property type="match status" value="1"/>
</dbReference>
<dbReference type="PANTHER" id="PTHR10851:SF0">
    <property type="entry name" value="PYRIDOXINE-5'-PHOSPHATE OXIDASE"/>
    <property type="match status" value="1"/>
</dbReference>
<dbReference type="PANTHER" id="PTHR10851">
    <property type="entry name" value="PYRIDOXINE-5-PHOSPHATE OXIDASE"/>
    <property type="match status" value="1"/>
</dbReference>
<dbReference type="Pfam" id="PF10590">
    <property type="entry name" value="PNP_phzG_C"/>
    <property type="match status" value="1"/>
</dbReference>
<dbReference type="Pfam" id="PF01243">
    <property type="entry name" value="PNPOx_N"/>
    <property type="match status" value="1"/>
</dbReference>
<dbReference type="PIRSF" id="PIRSF000190">
    <property type="entry name" value="Pyd_amn-ph_oxd"/>
    <property type="match status" value="1"/>
</dbReference>
<dbReference type="SUPFAM" id="SSF50475">
    <property type="entry name" value="FMN-binding split barrel"/>
    <property type="match status" value="1"/>
</dbReference>
<dbReference type="PROSITE" id="PS01064">
    <property type="entry name" value="PYRIDOX_OXIDASE"/>
    <property type="match status" value="1"/>
</dbReference>
<sequence>MNSERTAEAIPHADPLSIFESWFAEARASEPNDPNAMALATATAEGVPSVRMVLLKGHGPDGFVFYTNLQSRKGGELAANHHVALLFHWKSLRRQIRIEGTIAKVTPAEADAYFASRHPESRLGSAASDQSRPLPDRQTYLDRVDALRAQYPDGNVPRPAHWSGYRVTPSAIEFWQDRDFRLHERRRFLADGQGGWTSTLLYP</sequence>
<accession>Q2GCC6</accession>
<gene>
    <name evidence="1" type="primary">pdxH</name>
    <name type="ordered locus">Saro_0048</name>
</gene>
<name>PDXH_NOVAD</name>
<comment type="function">
    <text evidence="1">Catalyzes the oxidation of either pyridoxine 5'-phosphate (PNP) or pyridoxamine 5'-phosphate (PMP) into pyridoxal 5'-phosphate (PLP).</text>
</comment>
<comment type="catalytic activity">
    <reaction evidence="1">
        <text>pyridoxamine 5'-phosphate + O2 + H2O = pyridoxal 5'-phosphate + H2O2 + NH4(+)</text>
        <dbReference type="Rhea" id="RHEA:15817"/>
        <dbReference type="ChEBI" id="CHEBI:15377"/>
        <dbReference type="ChEBI" id="CHEBI:15379"/>
        <dbReference type="ChEBI" id="CHEBI:16240"/>
        <dbReference type="ChEBI" id="CHEBI:28938"/>
        <dbReference type="ChEBI" id="CHEBI:58451"/>
        <dbReference type="ChEBI" id="CHEBI:597326"/>
        <dbReference type="EC" id="1.4.3.5"/>
    </reaction>
</comment>
<comment type="catalytic activity">
    <reaction evidence="1">
        <text>pyridoxine 5'-phosphate + O2 = pyridoxal 5'-phosphate + H2O2</text>
        <dbReference type="Rhea" id="RHEA:15149"/>
        <dbReference type="ChEBI" id="CHEBI:15379"/>
        <dbReference type="ChEBI" id="CHEBI:16240"/>
        <dbReference type="ChEBI" id="CHEBI:58589"/>
        <dbReference type="ChEBI" id="CHEBI:597326"/>
        <dbReference type="EC" id="1.4.3.5"/>
    </reaction>
</comment>
<comment type="cofactor">
    <cofactor evidence="1">
        <name>FMN</name>
        <dbReference type="ChEBI" id="CHEBI:58210"/>
    </cofactor>
    <text evidence="1">Binds 1 FMN per subunit.</text>
</comment>
<comment type="pathway">
    <text evidence="1">Cofactor metabolism; pyridoxal 5'-phosphate salvage; pyridoxal 5'-phosphate from pyridoxamine 5'-phosphate: step 1/1.</text>
</comment>
<comment type="pathway">
    <text evidence="1">Cofactor metabolism; pyridoxal 5'-phosphate salvage; pyridoxal 5'-phosphate from pyridoxine 5'-phosphate: step 1/1.</text>
</comment>
<comment type="subunit">
    <text evidence="1">Homodimer.</text>
</comment>
<comment type="similarity">
    <text evidence="1">Belongs to the pyridoxamine 5'-phosphate oxidase family.</text>
</comment>
<keyword id="KW-0285">Flavoprotein</keyword>
<keyword id="KW-0288">FMN</keyword>
<keyword id="KW-0560">Oxidoreductase</keyword>
<keyword id="KW-0664">Pyridoxine biosynthesis</keyword>
<keyword id="KW-1185">Reference proteome</keyword>
<protein>
    <recommendedName>
        <fullName evidence="1">Pyridoxine/pyridoxamine 5'-phosphate oxidase</fullName>
        <ecNumber evidence="1">1.4.3.5</ecNumber>
    </recommendedName>
    <alternativeName>
        <fullName evidence="1">PNP/PMP oxidase</fullName>
        <shortName evidence="1">PNPOx</shortName>
    </alternativeName>
    <alternativeName>
        <fullName evidence="1">Pyridoxal 5'-phosphate synthase</fullName>
    </alternativeName>
</protein>
<organism>
    <name type="scientific">Novosphingobium aromaticivorans (strain ATCC 700278 / DSM 12444 / CCUG 56034 / CIP 105152 / NBRC 16084 / F199)</name>
    <dbReference type="NCBI Taxonomy" id="279238"/>
    <lineage>
        <taxon>Bacteria</taxon>
        <taxon>Pseudomonadati</taxon>
        <taxon>Pseudomonadota</taxon>
        <taxon>Alphaproteobacteria</taxon>
        <taxon>Sphingomonadales</taxon>
        <taxon>Sphingomonadaceae</taxon>
        <taxon>Novosphingobium</taxon>
    </lineage>
</organism>